<proteinExistence type="inferred from homology"/>
<keyword id="KW-1185">Reference proteome</keyword>
<keyword id="KW-0687">Ribonucleoprotein</keyword>
<keyword id="KW-0689">Ribosomal protein</keyword>
<feature type="chain" id="PRO_1000127096" description="Small ribosomal subunit protein uS10">
    <location>
        <begin position="1"/>
        <end position="102"/>
    </location>
</feature>
<comment type="function">
    <text evidence="1">Involved in the binding of tRNA to the ribosomes.</text>
</comment>
<comment type="subunit">
    <text evidence="1">Part of the 30S ribosomal subunit.</text>
</comment>
<comment type="similarity">
    <text evidence="1">Belongs to the universal ribosomal protein uS10 family.</text>
</comment>
<dbReference type="EMBL" id="DP000238">
    <property type="protein sequence ID" value="ABK77042.1"/>
    <property type="molecule type" value="Genomic_DNA"/>
</dbReference>
<dbReference type="SMR" id="A0RUM5"/>
<dbReference type="STRING" id="414004.CENSYa_0407"/>
<dbReference type="EnsemblBacteria" id="ABK77042">
    <property type="protein sequence ID" value="ABK77042"/>
    <property type="gene ID" value="CENSYa_0407"/>
</dbReference>
<dbReference type="KEGG" id="csy:CENSYa_0407"/>
<dbReference type="PATRIC" id="fig|414004.10.peg.367"/>
<dbReference type="HOGENOM" id="CLU_122625_0_1_2"/>
<dbReference type="Proteomes" id="UP000000758">
    <property type="component" value="Chromosome"/>
</dbReference>
<dbReference type="GO" id="GO:0015935">
    <property type="term" value="C:small ribosomal subunit"/>
    <property type="evidence" value="ECO:0007669"/>
    <property type="project" value="InterPro"/>
</dbReference>
<dbReference type="GO" id="GO:0003735">
    <property type="term" value="F:structural constituent of ribosome"/>
    <property type="evidence" value="ECO:0007669"/>
    <property type="project" value="InterPro"/>
</dbReference>
<dbReference type="GO" id="GO:0000049">
    <property type="term" value="F:tRNA binding"/>
    <property type="evidence" value="ECO:0007669"/>
    <property type="project" value="UniProtKB-UniRule"/>
</dbReference>
<dbReference type="GO" id="GO:0006412">
    <property type="term" value="P:translation"/>
    <property type="evidence" value="ECO:0007669"/>
    <property type="project" value="UniProtKB-UniRule"/>
</dbReference>
<dbReference type="FunFam" id="3.30.70.600:FF:000004">
    <property type="entry name" value="30S ribosomal protein S10"/>
    <property type="match status" value="1"/>
</dbReference>
<dbReference type="Gene3D" id="3.30.70.600">
    <property type="entry name" value="Ribosomal protein S10 domain"/>
    <property type="match status" value="1"/>
</dbReference>
<dbReference type="HAMAP" id="MF_00508">
    <property type="entry name" value="Ribosomal_uS10"/>
    <property type="match status" value="1"/>
</dbReference>
<dbReference type="InterPro" id="IPR001848">
    <property type="entry name" value="Ribosomal_uS10"/>
</dbReference>
<dbReference type="InterPro" id="IPR027486">
    <property type="entry name" value="Ribosomal_uS10_dom"/>
</dbReference>
<dbReference type="InterPro" id="IPR036838">
    <property type="entry name" value="Ribosomal_uS10_dom_sf"/>
</dbReference>
<dbReference type="InterPro" id="IPR005729">
    <property type="entry name" value="Ribosomal_uS10_euk/arc"/>
</dbReference>
<dbReference type="NCBIfam" id="TIGR01046">
    <property type="entry name" value="uS10_euk_arch"/>
    <property type="match status" value="1"/>
</dbReference>
<dbReference type="PANTHER" id="PTHR11700">
    <property type="entry name" value="30S RIBOSOMAL PROTEIN S10 FAMILY MEMBER"/>
    <property type="match status" value="1"/>
</dbReference>
<dbReference type="Pfam" id="PF00338">
    <property type="entry name" value="Ribosomal_S10"/>
    <property type="match status" value="1"/>
</dbReference>
<dbReference type="PRINTS" id="PR00971">
    <property type="entry name" value="RIBOSOMALS10"/>
</dbReference>
<dbReference type="SMART" id="SM01403">
    <property type="entry name" value="Ribosomal_S10"/>
    <property type="match status" value="1"/>
</dbReference>
<dbReference type="SUPFAM" id="SSF54999">
    <property type="entry name" value="Ribosomal protein S10"/>
    <property type="match status" value="1"/>
</dbReference>
<protein>
    <recommendedName>
        <fullName evidence="1">Small ribosomal subunit protein uS10</fullName>
    </recommendedName>
    <alternativeName>
        <fullName evidence="2">30S ribosomal protein S10</fullName>
    </alternativeName>
</protein>
<sequence length="102" mass="11566">MTQSARVKLTSINLLKLDGVCGIIMDIGKRTGVRIKGPTPLPVKKLHIATRKSPCGSGTETYEKWEMRMHRRIIDISADDKTIRRLIDLKIPDDVHLELFLT</sequence>
<evidence type="ECO:0000255" key="1">
    <source>
        <dbReference type="HAMAP-Rule" id="MF_00508"/>
    </source>
</evidence>
<evidence type="ECO:0000305" key="2"/>
<accession>A0RUM5</accession>
<organism>
    <name type="scientific">Cenarchaeum symbiosum (strain A)</name>
    <dbReference type="NCBI Taxonomy" id="414004"/>
    <lineage>
        <taxon>Archaea</taxon>
        <taxon>Nitrososphaerota</taxon>
        <taxon>Candidatus Cenarchaeales</taxon>
        <taxon>Candidatus Cenarchaeaceae</taxon>
        <taxon>Candidatus Cenarchaeum</taxon>
    </lineage>
</organism>
<gene>
    <name evidence="1" type="primary">rps10</name>
    <name type="ordered locus">CENSYa_0407</name>
</gene>
<reference key="1">
    <citation type="journal article" date="2006" name="Proc. Natl. Acad. Sci. U.S.A.">
        <title>Genomic analysis of the uncultivated marine crenarchaeote Cenarchaeum symbiosum.</title>
        <authorList>
            <person name="Hallam S.J."/>
            <person name="Konstantinidis K.T."/>
            <person name="Putnam N."/>
            <person name="Schleper C."/>
            <person name="Watanabe Y."/>
            <person name="Sugahara J."/>
            <person name="Preston C."/>
            <person name="de la Torre J."/>
            <person name="Richardson P.M."/>
            <person name="DeLong E.F."/>
        </authorList>
    </citation>
    <scope>NUCLEOTIDE SEQUENCE [LARGE SCALE GENOMIC DNA]</scope>
    <source>
        <strain>A</strain>
    </source>
</reference>
<name>RS10_CENSY</name>